<gene>
    <name type="primary">pufB</name>
</gene>
<sequence>MADLKPSLTGLTEEEAKEFHGIFVTSTVLYLATAVIVHYLVWTARPWIAPIPKGWVNLEGVQSALSYLV</sequence>
<evidence type="ECO:0000255" key="1"/>
<evidence type="ECO:0000269" key="2">
    <source>
    </source>
</evidence>
<evidence type="ECO:0000305" key="3"/>
<evidence type="ECO:0007829" key="4">
    <source>
        <dbReference type="PDB" id="6ET5"/>
    </source>
</evidence>
<keyword id="KW-0002">3D-structure</keyword>
<keyword id="KW-0042">Antenna complex</keyword>
<keyword id="KW-0076">Bacteriochlorophyll</keyword>
<keyword id="KW-0997">Cell inner membrane</keyword>
<keyword id="KW-1003">Cell membrane</keyword>
<keyword id="KW-0148">Chlorophyll</keyword>
<keyword id="KW-0157">Chromophore</keyword>
<keyword id="KW-0903">Direct protein sequencing</keyword>
<keyword id="KW-0437">Light-harvesting polypeptide</keyword>
<keyword id="KW-0460">Magnesium</keyword>
<keyword id="KW-0472">Membrane</keyword>
<keyword id="KW-0479">Metal-binding</keyword>
<keyword id="KW-0812">Transmembrane</keyword>
<keyword id="KW-1133">Transmembrane helix</keyword>
<reference key="1">
    <citation type="journal article" date="1990" name="J. Bacteriol.">
        <title>Structure and transcription of the genes encoding the B1015 light-harvesting complex beta and alpha subunits and the photosynthetic reaction center L, M, and cytochrome c subunits from Rhodopseudomonas viridis.</title>
        <authorList>
            <person name="Wiessner C."/>
            <person name="Dunger I."/>
            <person name="Michel H."/>
        </authorList>
    </citation>
    <scope>NUCLEOTIDE SEQUENCE [GENOMIC DNA]</scope>
</reference>
<reference key="2">
    <citation type="journal article" date="1985" name="Biol. Chem. Hoppe-Seyler">
        <title>The light-harvesting polypeptides of Rhodopseudomonas viridis. The complete amino-acid sequences of B1015-alpha, B1015-beta and B1015-gamma.</title>
        <authorList>
            <person name="Brunisholz R.A."/>
            <person name="Jay F."/>
            <person name="Suter F."/>
            <person name="Zuber H."/>
        </authorList>
    </citation>
    <scope>PROTEIN SEQUENCE OF 2-56</scope>
</reference>
<organism>
    <name type="scientific">Blastochloris viridis</name>
    <name type="common">Rhodopseudomonas viridis</name>
    <dbReference type="NCBI Taxonomy" id="1079"/>
    <lineage>
        <taxon>Bacteria</taxon>
        <taxon>Pseudomonadati</taxon>
        <taxon>Pseudomonadota</taxon>
        <taxon>Alphaproteobacteria</taxon>
        <taxon>Hyphomicrobiales</taxon>
        <taxon>Blastochloridaceae</taxon>
        <taxon>Blastochloris</taxon>
    </lineage>
</organism>
<proteinExistence type="evidence at protein level"/>
<name>LHB_BLAVI</name>
<comment type="function">
    <text>Antenna complexes are light-harvesting systems, which transfer the excitation energy to the reaction centers.</text>
</comment>
<comment type="subunit">
    <text>The core complex is formed by different alpha and beta chains, binding bacteriochlorophyll molecules, and arranged most probably in tetrameric structures disposed around the reaction center. The non-pigmented gamma chains may constitute additional components.</text>
</comment>
<comment type="subcellular location">
    <subcellularLocation>
        <location>Cell inner membrane</location>
        <topology>Single-pass type II membrane protein</topology>
    </subcellularLocation>
</comment>
<comment type="similarity">
    <text evidence="3">Belongs to the antenna complex beta subunit family.</text>
</comment>
<dbReference type="EMBL" id="M55261">
    <property type="protein sequence ID" value="AAA64255.1"/>
    <property type="molecule type" value="Genomic_DNA"/>
</dbReference>
<dbReference type="PIR" id="B35382">
    <property type="entry name" value="LBRFBV"/>
</dbReference>
<dbReference type="RefSeq" id="WP_055038635.1">
    <property type="nucleotide sequence ID" value="NZ_AP014854.2"/>
</dbReference>
<dbReference type="PDB" id="6ET5">
    <property type="method" value="EM"/>
    <property type="resolution" value="3.00 A"/>
    <property type="chains" value="1/4/7/G/N/Q/T/W/Z/c/f/i/l/o/r/u/x=1-56"/>
</dbReference>
<dbReference type="PDBsum" id="6ET5"/>
<dbReference type="EMDB" id="EMD-3951"/>
<dbReference type="SMR" id="P04124"/>
<dbReference type="IntAct" id="P04124">
    <property type="interactions" value="1"/>
</dbReference>
<dbReference type="STRING" id="1079.BVIR_602"/>
<dbReference type="OrthoDB" id="7391998at2"/>
<dbReference type="GO" id="GO:0005886">
    <property type="term" value="C:plasma membrane"/>
    <property type="evidence" value="ECO:0007669"/>
    <property type="project" value="UniProtKB-SubCell"/>
</dbReference>
<dbReference type="GO" id="GO:0030077">
    <property type="term" value="C:plasma membrane light-harvesting complex"/>
    <property type="evidence" value="ECO:0007669"/>
    <property type="project" value="InterPro"/>
</dbReference>
<dbReference type="GO" id="GO:0042314">
    <property type="term" value="F:bacteriochlorophyll binding"/>
    <property type="evidence" value="ECO:0007669"/>
    <property type="project" value="UniProtKB-KW"/>
</dbReference>
<dbReference type="GO" id="GO:0045156">
    <property type="term" value="F:electron transporter, transferring electrons within the cyclic electron transport pathway of photosynthesis activity"/>
    <property type="evidence" value="ECO:0007669"/>
    <property type="project" value="InterPro"/>
</dbReference>
<dbReference type="GO" id="GO:0046872">
    <property type="term" value="F:metal ion binding"/>
    <property type="evidence" value="ECO:0007669"/>
    <property type="project" value="UniProtKB-KW"/>
</dbReference>
<dbReference type="GO" id="GO:0019684">
    <property type="term" value="P:photosynthesis, light reaction"/>
    <property type="evidence" value="ECO:0007669"/>
    <property type="project" value="InterPro"/>
</dbReference>
<dbReference type="Gene3D" id="1.20.5.250">
    <property type="match status" value="1"/>
</dbReference>
<dbReference type="InterPro" id="IPR000066">
    <property type="entry name" value="Antenna_a/b"/>
</dbReference>
<dbReference type="InterPro" id="IPR023623">
    <property type="entry name" value="Antenna_beta_CS"/>
</dbReference>
<dbReference type="InterPro" id="IPR023624">
    <property type="entry name" value="Antenna_beta_dom_sf"/>
</dbReference>
<dbReference type="InterPro" id="IPR002362">
    <property type="entry name" value="LHB-1/5"/>
</dbReference>
<dbReference type="InterPro" id="IPR035889">
    <property type="entry name" value="Light-harvesting_complex"/>
</dbReference>
<dbReference type="NCBIfam" id="NF040862">
    <property type="entry name" value="pufB_517_ASD"/>
    <property type="match status" value="1"/>
</dbReference>
<dbReference type="Pfam" id="PF00556">
    <property type="entry name" value="LHC"/>
    <property type="match status" value="1"/>
</dbReference>
<dbReference type="PRINTS" id="PR00674">
    <property type="entry name" value="LIGHTHARVSTB"/>
</dbReference>
<dbReference type="SUPFAM" id="SSF56918">
    <property type="entry name" value="Light-harvesting complex subunits"/>
    <property type="match status" value="1"/>
</dbReference>
<dbReference type="PROSITE" id="PS00969">
    <property type="entry name" value="ANTENNA_COMP_BETA"/>
    <property type="match status" value="1"/>
</dbReference>
<protein>
    <recommendedName>
        <fullName>Light-harvesting protein B-1015 beta chain</fullName>
    </recommendedName>
    <alternativeName>
        <fullName>Antenna pigment protein beta chain</fullName>
    </alternativeName>
</protein>
<feature type="initiator methionine" description="Removed" evidence="2">
    <location>
        <position position="1"/>
    </location>
</feature>
<feature type="chain" id="PRO_0000001632" description="Light-harvesting protein B-1015 beta chain">
    <location>
        <begin position="2"/>
        <end position="56"/>
    </location>
</feature>
<feature type="propeptide" id="PRO_0000001633">
    <location>
        <begin position="57"/>
        <end position="69"/>
    </location>
</feature>
<feature type="topological domain" description="Cytoplasmic" evidence="1">
    <location>
        <begin position="2"/>
        <end position="21"/>
    </location>
</feature>
<feature type="transmembrane region" description="Helical" evidence="1">
    <location>
        <begin position="22"/>
        <end position="44"/>
    </location>
</feature>
<feature type="topological domain" description="Periplasmic" evidence="1">
    <location>
        <begin position="45"/>
        <end position="56"/>
    </location>
</feature>
<feature type="binding site" description="axial binding residue" evidence="1">
    <location>
        <position position="20"/>
    </location>
    <ligand>
        <name>a bacteriochlorophyll</name>
        <dbReference type="ChEBI" id="CHEBI:38201"/>
    </ligand>
    <ligandPart>
        <name>Mg</name>
        <dbReference type="ChEBI" id="CHEBI:25107"/>
    </ligandPart>
</feature>
<feature type="binding site" description="axial binding residue" evidence="1">
    <location>
        <position position="38"/>
    </location>
    <ligand>
        <name>a bacteriochlorophyll</name>
        <dbReference type="ChEBI" id="CHEBI:38201"/>
    </ligand>
    <ligandPart>
        <name>Mg</name>
        <dbReference type="ChEBI" id="CHEBI:25107"/>
    </ligandPart>
</feature>
<feature type="turn" evidence="4">
    <location>
        <begin position="5"/>
        <end position="9"/>
    </location>
</feature>
<feature type="helix" evidence="4">
    <location>
        <begin position="18"/>
        <end position="44"/>
    </location>
</feature>
<accession>P04124</accession>